<comment type="function">
    <text evidence="1">Specifically methylates the pseudouridine at position 1915 (m3Psi1915) in 23S rRNA.</text>
</comment>
<comment type="catalytic activity">
    <reaction evidence="1">
        <text>pseudouridine(1915) in 23S rRNA + S-adenosyl-L-methionine = N(3)-methylpseudouridine(1915) in 23S rRNA + S-adenosyl-L-homocysteine + H(+)</text>
        <dbReference type="Rhea" id="RHEA:42752"/>
        <dbReference type="Rhea" id="RHEA-COMP:10221"/>
        <dbReference type="Rhea" id="RHEA-COMP:10222"/>
        <dbReference type="ChEBI" id="CHEBI:15378"/>
        <dbReference type="ChEBI" id="CHEBI:57856"/>
        <dbReference type="ChEBI" id="CHEBI:59789"/>
        <dbReference type="ChEBI" id="CHEBI:65314"/>
        <dbReference type="ChEBI" id="CHEBI:74486"/>
        <dbReference type="EC" id="2.1.1.177"/>
    </reaction>
</comment>
<comment type="subunit">
    <text evidence="1">Homodimer.</text>
</comment>
<comment type="subcellular location">
    <subcellularLocation>
        <location evidence="1">Cytoplasm</location>
    </subcellularLocation>
</comment>
<comment type="similarity">
    <text evidence="1">Belongs to the RNA methyltransferase RlmH family.</text>
</comment>
<gene>
    <name evidence="1" type="primary">rlmH</name>
    <name type="ordered locus">BURPS1106A_1235</name>
</gene>
<feature type="chain" id="PRO_1000061767" description="Ribosomal RNA large subunit methyltransferase H">
    <location>
        <begin position="1"/>
        <end position="156"/>
    </location>
</feature>
<feature type="binding site" evidence="1">
    <location>
        <position position="73"/>
    </location>
    <ligand>
        <name>S-adenosyl-L-methionine</name>
        <dbReference type="ChEBI" id="CHEBI:59789"/>
    </ligand>
</feature>
<feature type="binding site" evidence="1">
    <location>
        <position position="104"/>
    </location>
    <ligand>
        <name>S-adenosyl-L-methionine</name>
        <dbReference type="ChEBI" id="CHEBI:59789"/>
    </ligand>
</feature>
<feature type="binding site" evidence="1">
    <location>
        <begin position="123"/>
        <end position="128"/>
    </location>
    <ligand>
        <name>S-adenosyl-L-methionine</name>
        <dbReference type="ChEBI" id="CHEBI:59789"/>
    </ligand>
</feature>
<proteinExistence type="inferred from homology"/>
<protein>
    <recommendedName>
        <fullName evidence="1">Ribosomal RNA large subunit methyltransferase H</fullName>
        <ecNumber evidence="1">2.1.1.177</ecNumber>
    </recommendedName>
    <alternativeName>
        <fullName evidence="1">23S rRNA (pseudouridine1915-N3)-methyltransferase</fullName>
    </alternativeName>
    <alternativeName>
        <fullName evidence="1">23S rRNA m3Psi1915 methyltransferase</fullName>
    </alternativeName>
    <alternativeName>
        <fullName evidence="1">rRNA (pseudouridine-N3-)-methyltransferase RlmH</fullName>
    </alternativeName>
</protein>
<reference key="1">
    <citation type="journal article" date="2010" name="Genome Biol. Evol.">
        <title>Continuing evolution of Burkholderia mallei through genome reduction and large-scale rearrangements.</title>
        <authorList>
            <person name="Losada L."/>
            <person name="Ronning C.M."/>
            <person name="DeShazer D."/>
            <person name="Woods D."/>
            <person name="Fedorova N."/>
            <person name="Kim H.S."/>
            <person name="Shabalina S.A."/>
            <person name="Pearson T.R."/>
            <person name="Brinkac L."/>
            <person name="Tan P."/>
            <person name="Nandi T."/>
            <person name="Crabtree J."/>
            <person name="Badger J."/>
            <person name="Beckstrom-Sternberg S."/>
            <person name="Saqib M."/>
            <person name="Schutzer S.E."/>
            <person name="Keim P."/>
            <person name="Nierman W.C."/>
        </authorList>
    </citation>
    <scope>NUCLEOTIDE SEQUENCE [LARGE SCALE GENOMIC DNA]</scope>
    <source>
        <strain>1106a</strain>
    </source>
</reference>
<keyword id="KW-0963">Cytoplasm</keyword>
<keyword id="KW-0489">Methyltransferase</keyword>
<keyword id="KW-0698">rRNA processing</keyword>
<keyword id="KW-0949">S-adenosyl-L-methionine</keyword>
<keyword id="KW-0808">Transferase</keyword>
<accession>A3NT43</accession>
<sequence>MKLHIVAVGHKMPGWIASGFDEYAKRMPPELRIELREVKPELRSGSRTADSVMAAEQQRIEAALPKNARVVALDERGRDWTTMQLAQALPAWQQDGRDVAFVIGGADGLAPALKSRAELLLRVSSLTLPHGMVRVLLAEQLYRAWSITQNHPYHRA</sequence>
<evidence type="ECO:0000255" key="1">
    <source>
        <dbReference type="HAMAP-Rule" id="MF_00658"/>
    </source>
</evidence>
<name>RLMH_BURP0</name>
<dbReference type="EC" id="2.1.1.177" evidence="1"/>
<dbReference type="EMBL" id="CP000572">
    <property type="protein sequence ID" value="ABN90669.1"/>
    <property type="molecule type" value="Genomic_DNA"/>
</dbReference>
<dbReference type="RefSeq" id="WP_004186098.1">
    <property type="nucleotide sequence ID" value="NC_009076.1"/>
</dbReference>
<dbReference type="SMR" id="A3NT43"/>
<dbReference type="GeneID" id="93059640"/>
<dbReference type="KEGG" id="bpl:BURPS1106A_1235"/>
<dbReference type="HOGENOM" id="CLU_100552_1_0_4"/>
<dbReference type="Proteomes" id="UP000006738">
    <property type="component" value="Chromosome I"/>
</dbReference>
<dbReference type="GO" id="GO:0005737">
    <property type="term" value="C:cytoplasm"/>
    <property type="evidence" value="ECO:0007669"/>
    <property type="project" value="UniProtKB-SubCell"/>
</dbReference>
<dbReference type="GO" id="GO:0070038">
    <property type="term" value="F:rRNA (pseudouridine-N3-)-methyltransferase activity"/>
    <property type="evidence" value="ECO:0007669"/>
    <property type="project" value="UniProtKB-UniRule"/>
</dbReference>
<dbReference type="CDD" id="cd18081">
    <property type="entry name" value="RlmH-like"/>
    <property type="match status" value="1"/>
</dbReference>
<dbReference type="Gene3D" id="3.40.1280.10">
    <property type="match status" value="1"/>
</dbReference>
<dbReference type="HAMAP" id="MF_00658">
    <property type="entry name" value="23SrRNA_methyltr_H"/>
    <property type="match status" value="1"/>
</dbReference>
<dbReference type="InterPro" id="IPR029028">
    <property type="entry name" value="Alpha/beta_knot_MTases"/>
</dbReference>
<dbReference type="InterPro" id="IPR003742">
    <property type="entry name" value="RlmH-like"/>
</dbReference>
<dbReference type="InterPro" id="IPR029026">
    <property type="entry name" value="tRNA_m1G_MTases_N"/>
</dbReference>
<dbReference type="NCBIfam" id="NF000986">
    <property type="entry name" value="PRK00103.1-4"/>
    <property type="match status" value="1"/>
</dbReference>
<dbReference type="NCBIfam" id="TIGR00246">
    <property type="entry name" value="tRNA_RlmH_YbeA"/>
    <property type="match status" value="1"/>
</dbReference>
<dbReference type="PANTHER" id="PTHR33603">
    <property type="entry name" value="METHYLTRANSFERASE"/>
    <property type="match status" value="1"/>
</dbReference>
<dbReference type="PANTHER" id="PTHR33603:SF1">
    <property type="entry name" value="RIBOSOMAL RNA LARGE SUBUNIT METHYLTRANSFERASE H"/>
    <property type="match status" value="1"/>
</dbReference>
<dbReference type="Pfam" id="PF02590">
    <property type="entry name" value="SPOUT_MTase"/>
    <property type="match status" value="1"/>
</dbReference>
<dbReference type="PIRSF" id="PIRSF004505">
    <property type="entry name" value="MT_bac"/>
    <property type="match status" value="1"/>
</dbReference>
<dbReference type="SUPFAM" id="SSF75217">
    <property type="entry name" value="alpha/beta knot"/>
    <property type="match status" value="1"/>
</dbReference>
<organism>
    <name type="scientific">Burkholderia pseudomallei (strain 1106a)</name>
    <dbReference type="NCBI Taxonomy" id="357348"/>
    <lineage>
        <taxon>Bacteria</taxon>
        <taxon>Pseudomonadati</taxon>
        <taxon>Pseudomonadota</taxon>
        <taxon>Betaproteobacteria</taxon>
        <taxon>Burkholderiales</taxon>
        <taxon>Burkholderiaceae</taxon>
        <taxon>Burkholderia</taxon>
        <taxon>pseudomallei group</taxon>
    </lineage>
</organism>